<accession>A7ZFK2</accession>
<organism>
    <name type="scientific">Campylobacter concisus (strain 13826)</name>
    <dbReference type="NCBI Taxonomy" id="360104"/>
    <lineage>
        <taxon>Bacteria</taxon>
        <taxon>Pseudomonadati</taxon>
        <taxon>Campylobacterota</taxon>
        <taxon>Epsilonproteobacteria</taxon>
        <taxon>Campylobacterales</taxon>
        <taxon>Campylobacteraceae</taxon>
        <taxon>Campylobacter</taxon>
    </lineage>
</organism>
<comment type="function">
    <text evidence="1">Involved in unsaturated fatty acids biosynthesis. Catalyzes the dehydration of short chain beta-hydroxyacyl-ACPs and long chain saturated and unsaturated beta-hydroxyacyl-ACPs.</text>
</comment>
<comment type="catalytic activity">
    <reaction evidence="1">
        <text>a (3R)-hydroxyacyl-[ACP] = a (2E)-enoyl-[ACP] + H2O</text>
        <dbReference type="Rhea" id="RHEA:13097"/>
        <dbReference type="Rhea" id="RHEA-COMP:9925"/>
        <dbReference type="Rhea" id="RHEA-COMP:9945"/>
        <dbReference type="ChEBI" id="CHEBI:15377"/>
        <dbReference type="ChEBI" id="CHEBI:78784"/>
        <dbReference type="ChEBI" id="CHEBI:78827"/>
        <dbReference type="EC" id="4.2.1.59"/>
    </reaction>
</comment>
<comment type="subcellular location">
    <subcellularLocation>
        <location evidence="1">Cytoplasm</location>
    </subcellularLocation>
</comment>
<comment type="similarity">
    <text evidence="1">Belongs to the thioester dehydratase family. FabZ subfamily.</text>
</comment>
<dbReference type="EC" id="4.2.1.59" evidence="1"/>
<dbReference type="EMBL" id="CP000792">
    <property type="protein sequence ID" value="EAT98436.1"/>
    <property type="molecule type" value="Genomic_DNA"/>
</dbReference>
<dbReference type="RefSeq" id="WP_004317884.1">
    <property type="nucleotide sequence ID" value="NC_009802.2"/>
</dbReference>
<dbReference type="SMR" id="A7ZFK2"/>
<dbReference type="STRING" id="360104.CCC13826_2122"/>
<dbReference type="KEGG" id="cco:CCC13826_2122"/>
<dbReference type="eggNOG" id="COG0764">
    <property type="taxonomic scope" value="Bacteria"/>
</dbReference>
<dbReference type="HOGENOM" id="CLU_078912_1_2_7"/>
<dbReference type="OrthoDB" id="9772788at2"/>
<dbReference type="Proteomes" id="UP000001121">
    <property type="component" value="Chromosome"/>
</dbReference>
<dbReference type="GO" id="GO:0005737">
    <property type="term" value="C:cytoplasm"/>
    <property type="evidence" value="ECO:0007669"/>
    <property type="project" value="UniProtKB-SubCell"/>
</dbReference>
<dbReference type="GO" id="GO:0016020">
    <property type="term" value="C:membrane"/>
    <property type="evidence" value="ECO:0007669"/>
    <property type="project" value="GOC"/>
</dbReference>
<dbReference type="GO" id="GO:0019171">
    <property type="term" value="F:(3R)-hydroxyacyl-[acyl-carrier-protein] dehydratase activity"/>
    <property type="evidence" value="ECO:0007669"/>
    <property type="project" value="UniProtKB-EC"/>
</dbReference>
<dbReference type="GO" id="GO:0006633">
    <property type="term" value="P:fatty acid biosynthetic process"/>
    <property type="evidence" value="ECO:0007669"/>
    <property type="project" value="UniProtKB-UniRule"/>
</dbReference>
<dbReference type="GO" id="GO:0009245">
    <property type="term" value="P:lipid A biosynthetic process"/>
    <property type="evidence" value="ECO:0007669"/>
    <property type="project" value="UniProtKB-UniRule"/>
</dbReference>
<dbReference type="CDD" id="cd01288">
    <property type="entry name" value="FabZ"/>
    <property type="match status" value="1"/>
</dbReference>
<dbReference type="FunFam" id="3.10.129.10:FF:000001">
    <property type="entry name" value="3-hydroxyacyl-[acyl-carrier-protein] dehydratase FabZ"/>
    <property type="match status" value="1"/>
</dbReference>
<dbReference type="Gene3D" id="3.10.129.10">
    <property type="entry name" value="Hotdog Thioesterase"/>
    <property type="match status" value="1"/>
</dbReference>
<dbReference type="HAMAP" id="MF_00406">
    <property type="entry name" value="FabZ"/>
    <property type="match status" value="1"/>
</dbReference>
<dbReference type="InterPro" id="IPR013114">
    <property type="entry name" value="FabA_FabZ"/>
</dbReference>
<dbReference type="InterPro" id="IPR010084">
    <property type="entry name" value="FabZ"/>
</dbReference>
<dbReference type="InterPro" id="IPR029069">
    <property type="entry name" value="HotDog_dom_sf"/>
</dbReference>
<dbReference type="NCBIfam" id="TIGR01750">
    <property type="entry name" value="fabZ"/>
    <property type="match status" value="1"/>
</dbReference>
<dbReference type="NCBIfam" id="NF000582">
    <property type="entry name" value="PRK00006.1"/>
    <property type="match status" value="1"/>
</dbReference>
<dbReference type="PANTHER" id="PTHR30272">
    <property type="entry name" value="3-HYDROXYACYL-[ACYL-CARRIER-PROTEIN] DEHYDRATASE"/>
    <property type="match status" value="1"/>
</dbReference>
<dbReference type="PANTHER" id="PTHR30272:SF1">
    <property type="entry name" value="3-HYDROXYACYL-[ACYL-CARRIER-PROTEIN] DEHYDRATASE"/>
    <property type="match status" value="1"/>
</dbReference>
<dbReference type="Pfam" id="PF07977">
    <property type="entry name" value="FabA"/>
    <property type="match status" value="1"/>
</dbReference>
<dbReference type="SUPFAM" id="SSF54637">
    <property type="entry name" value="Thioesterase/thiol ester dehydrase-isomerase"/>
    <property type="match status" value="1"/>
</dbReference>
<evidence type="ECO:0000255" key="1">
    <source>
        <dbReference type="HAMAP-Rule" id="MF_00406"/>
    </source>
</evidence>
<reference key="1">
    <citation type="submission" date="2007-10" db="EMBL/GenBank/DDBJ databases">
        <title>Genome sequence of Campylobacter concisus 13826 isolated from human feces.</title>
        <authorList>
            <person name="Fouts D.E."/>
            <person name="Mongodin E.F."/>
            <person name="Puiu D."/>
            <person name="Sebastian Y."/>
            <person name="Miller W.G."/>
            <person name="Mandrell R.E."/>
            <person name="On S."/>
            <person name="Nelson K.E."/>
        </authorList>
    </citation>
    <scope>NUCLEOTIDE SEQUENCE [LARGE SCALE GENOMIC DNA]</scope>
    <source>
        <strain>13826</strain>
    </source>
</reference>
<feature type="chain" id="PRO_1000049840" description="3-hydroxyacyl-[acyl-carrier-protein] dehydratase FabZ">
    <location>
        <begin position="1"/>
        <end position="148"/>
    </location>
</feature>
<feature type="active site" evidence="1">
    <location>
        <position position="48"/>
    </location>
</feature>
<name>FABZ_CAMC1</name>
<keyword id="KW-0963">Cytoplasm</keyword>
<keyword id="KW-0441">Lipid A biosynthesis</keyword>
<keyword id="KW-0444">Lipid biosynthesis</keyword>
<keyword id="KW-0443">Lipid metabolism</keyword>
<keyword id="KW-0456">Lyase</keyword>
<protein>
    <recommendedName>
        <fullName evidence="1">3-hydroxyacyl-[acyl-carrier-protein] dehydratase FabZ</fullName>
        <ecNumber evidence="1">4.2.1.59</ecNumber>
    </recommendedName>
    <alternativeName>
        <fullName evidence="1">(3R)-hydroxymyristoyl-[acyl-carrier-protein] dehydratase</fullName>
        <shortName evidence="1">(3R)-hydroxymyristoyl-ACP dehydrase</shortName>
    </alternativeName>
    <alternativeName>
        <fullName evidence="1">Beta-hydroxyacyl-ACP dehydratase</fullName>
    </alternativeName>
</protein>
<proteinExistence type="inferred from homology"/>
<sequence length="148" mass="16653">MIDVVEIQKILPHRFPFLLIDRVVELEPAKNIVAYKNVTIGEPIFQGHFPGHPIYPGVMIIEGMAQAGGVLAFKSMSDEHQAGIENKVVYFMSIDGAKFRHPVRPGDRLEYRLNVLKHKGNIWVLEGKAYVDDVLCAEAELKAMIVDK</sequence>
<gene>
    <name evidence="1" type="primary">fabZ</name>
    <name type="ordered locus">Ccon26_17230</name>
    <name type="ORF">CCC13826_2122</name>
</gene>